<protein>
    <recommendedName>
        <fullName>Uncharacterized protein L662</fullName>
    </recommendedName>
</protein>
<accession>Q5UQ60</accession>
<name>YL662_MIMIV</name>
<dbReference type="EMBL" id="AY653733">
    <property type="protein sequence ID" value="AAV50923.1"/>
    <property type="molecule type" value="Genomic_DNA"/>
</dbReference>
<dbReference type="SMR" id="Q5UQ60"/>
<dbReference type="KEGG" id="vg:9925308"/>
<dbReference type="OrthoDB" id="27505at10239"/>
<dbReference type="Proteomes" id="UP000001134">
    <property type="component" value="Genome"/>
</dbReference>
<dbReference type="InterPro" id="IPR025533">
    <property type="entry name" value="DUF4419"/>
</dbReference>
<dbReference type="PANTHER" id="PTHR31252">
    <property type="entry name" value="DUF4419 DOMAIN-CONTAINING PROTEIN"/>
    <property type="match status" value="1"/>
</dbReference>
<dbReference type="PANTHER" id="PTHR31252:SF11">
    <property type="entry name" value="DUF4419 DOMAIN-CONTAINING PROTEIN"/>
    <property type="match status" value="1"/>
</dbReference>
<dbReference type="Pfam" id="PF14388">
    <property type="entry name" value="DUF4419"/>
    <property type="match status" value="1"/>
</dbReference>
<sequence>MAQIILDDKLEKLNVNPVFVDLKNQQDKSIIVQNYENHQTIKRTVPNALIDMIKFAWANHLPVSLRPDDFWIQILTQFATHVNLNSELYQKYFSNKDNPDSETQISIGYTDFDNVQDVPIDDFVQKILSKLNECIERNDLITKLQCDFTTSNSITLLTSQIAFMYMADKFFSYKMILGCGIPSIKLDGTIDDWTNLKSKIRTLLEIADDKIKSWLSNLEIITNKIITSIKYPGVFVNFWKKMFYVERCGSGSQTCSKGWICHLFLYDKSYCKLGHVFDSENELYDLKGITFWDDFPNCEVKCPFMVNSESRPHYLNAGIYGFTMIDDHLRLISGFTVSKLDYDEWSFDDKPIHILKINFSQETYSRIKYNGKLIHEWYQITGVTNEDRLEYDCDNTIIYYNTESSSIDFIYRGENKYGPVCSYQKVKFTDGGVKVTSKGSASLEYFIKNSIKIYEERDSTHN</sequence>
<organismHost>
    <name type="scientific">Acanthamoeba polyphaga</name>
    <name type="common">Amoeba</name>
    <dbReference type="NCBI Taxonomy" id="5757"/>
</organismHost>
<organism>
    <name type="scientific">Acanthamoeba polyphaga mimivirus</name>
    <name type="common">APMV</name>
    <dbReference type="NCBI Taxonomy" id="212035"/>
    <lineage>
        <taxon>Viruses</taxon>
        <taxon>Varidnaviria</taxon>
        <taxon>Bamfordvirae</taxon>
        <taxon>Nucleocytoviricota</taxon>
        <taxon>Megaviricetes</taxon>
        <taxon>Imitervirales</taxon>
        <taxon>Mimiviridae</taxon>
        <taxon>Megamimivirinae</taxon>
        <taxon>Mimivirus</taxon>
        <taxon>Mimivirus bradfordmassiliense</taxon>
    </lineage>
</organism>
<proteinExistence type="predicted"/>
<reference key="1">
    <citation type="journal article" date="2004" name="Science">
        <title>The 1.2-megabase genome sequence of Mimivirus.</title>
        <authorList>
            <person name="Raoult D."/>
            <person name="Audic S."/>
            <person name="Robert C."/>
            <person name="Abergel C."/>
            <person name="Renesto P."/>
            <person name="Ogata H."/>
            <person name="La Scola B."/>
            <person name="Susan M."/>
            <person name="Claverie J.-M."/>
        </authorList>
    </citation>
    <scope>NUCLEOTIDE SEQUENCE [LARGE SCALE GENOMIC DNA]</scope>
    <source>
        <strain>Rowbotham-Bradford</strain>
    </source>
</reference>
<gene>
    <name type="ordered locus">MIMI_L662</name>
</gene>
<feature type="chain" id="PRO_0000247373" description="Uncharacterized protein L662">
    <location>
        <begin position="1"/>
        <end position="462"/>
    </location>
</feature>
<keyword id="KW-1185">Reference proteome</keyword>